<sequence length="284" mass="32679">MSNSVTNFEMSSVLPGKKPCQGKNNESQVVQTTPIKKHSVTFKNQSSLGVIDHYARLTNKSHSSVIAEVVDLAIPILEKCNRHNWSINEIKNDLLKFSIKESINRSRGKTEVTLEEYCSLIWKTNIMSPLKIPIADYFQLNANDEFMGKDEKTVIRERLSSLRENYDMEKAIYIYNQRHFDVKHQSVSGYSNIILIHRTTFEGYYFDAGQALLLSTSQLIIFGINEVLRRKGIVMPYPVVCWIDIYHVNEMVVMLPVLRKTDVSNRVNVPDDIIINPYSQESRT</sequence>
<accession>P71296</accession>
<accession>Q2MCE3</accession>
<gene>
    <name type="primary">yagM</name>
    <name type="ordered locus">b0279</name>
    <name type="ordered locus">JW0273</name>
</gene>
<proteinExistence type="predicted"/>
<organism>
    <name type="scientific">Escherichia coli (strain K12)</name>
    <dbReference type="NCBI Taxonomy" id="83333"/>
    <lineage>
        <taxon>Bacteria</taxon>
        <taxon>Pseudomonadati</taxon>
        <taxon>Pseudomonadota</taxon>
        <taxon>Gammaproteobacteria</taxon>
        <taxon>Enterobacterales</taxon>
        <taxon>Enterobacteriaceae</taxon>
        <taxon>Escherichia</taxon>
    </lineage>
</organism>
<protein>
    <recommendedName>
        <fullName>Uncharacterized protein YagM</fullName>
    </recommendedName>
</protein>
<name>YAGM_ECOLI</name>
<reference key="1">
    <citation type="submission" date="1997-01" db="EMBL/GenBank/DDBJ databases">
        <title>Sequence of minutes 4-25 of Escherichia coli.</title>
        <authorList>
            <person name="Chung E."/>
            <person name="Allen E."/>
            <person name="Araujo R."/>
            <person name="Aparicio A.M."/>
            <person name="Davis K."/>
            <person name="Duncan M."/>
            <person name="Federspiel N."/>
            <person name="Hyman R."/>
            <person name="Kalman S."/>
            <person name="Komp C."/>
            <person name="Kurdi O."/>
            <person name="Lew H."/>
            <person name="Lin D."/>
            <person name="Namath A."/>
            <person name="Oefner P."/>
            <person name="Roberts D."/>
            <person name="Schramm S."/>
            <person name="Davis R.W."/>
        </authorList>
    </citation>
    <scope>NUCLEOTIDE SEQUENCE [LARGE SCALE GENOMIC DNA]</scope>
    <source>
        <strain>K12 / MG1655 / ATCC 47076</strain>
    </source>
</reference>
<reference key="2">
    <citation type="journal article" date="1997" name="Science">
        <title>The complete genome sequence of Escherichia coli K-12.</title>
        <authorList>
            <person name="Blattner F.R."/>
            <person name="Plunkett G. III"/>
            <person name="Bloch C.A."/>
            <person name="Perna N.T."/>
            <person name="Burland V."/>
            <person name="Riley M."/>
            <person name="Collado-Vides J."/>
            <person name="Glasner J.D."/>
            <person name="Rode C.K."/>
            <person name="Mayhew G.F."/>
            <person name="Gregor J."/>
            <person name="Davis N.W."/>
            <person name="Kirkpatrick H.A."/>
            <person name="Goeden M.A."/>
            <person name="Rose D.J."/>
            <person name="Mau B."/>
            <person name="Shao Y."/>
        </authorList>
    </citation>
    <scope>NUCLEOTIDE SEQUENCE [LARGE SCALE GENOMIC DNA]</scope>
    <source>
        <strain>K12 / MG1655 / ATCC 47076</strain>
    </source>
</reference>
<reference key="3">
    <citation type="journal article" date="2006" name="Mol. Syst. Biol.">
        <title>Highly accurate genome sequences of Escherichia coli K-12 strains MG1655 and W3110.</title>
        <authorList>
            <person name="Hayashi K."/>
            <person name="Morooka N."/>
            <person name="Yamamoto Y."/>
            <person name="Fujita K."/>
            <person name="Isono K."/>
            <person name="Choi S."/>
            <person name="Ohtsubo E."/>
            <person name="Baba T."/>
            <person name="Wanner B.L."/>
            <person name="Mori H."/>
            <person name="Horiuchi T."/>
        </authorList>
    </citation>
    <scope>NUCLEOTIDE SEQUENCE [LARGE SCALE GENOMIC DNA]</scope>
    <source>
        <strain>K12 / W3110 / ATCC 27325 / DSM 5911</strain>
    </source>
</reference>
<feature type="chain" id="PRO_0000168559" description="Uncharacterized protein YagM">
    <location>
        <begin position="1"/>
        <end position="284"/>
    </location>
</feature>
<feature type="region of interest" description="Disordered" evidence="1">
    <location>
        <begin position="1"/>
        <end position="28"/>
    </location>
</feature>
<feature type="compositionally biased region" description="Polar residues" evidence="1">
    <location>
        <begin position="1"/>
        <end position="10"/>
    </location>
</feature>
<dbReference type="EMBL" id="U73857">
    <property type="protein sequence ID" value="AAB18008.1"/>
    <property type="molecule type" value="Genomic_DNA"/>
</dbReference>
<dbReference type="EMBL" id="U00096">
    <property type="protein sequence ID" value="AAC73382.1"/>
    <property type="molecule type" value="Genomic_DNA"/>
</dbReference>
<dbReference type="EMBL" id="AP009048">
    <property type="protein sequence ID" value="BAE76063.1"/>
    <property type="molecule type" value="Genomic_DNA"/>
</dbReference>
<dbReference type="PIR" id="G64753">
    <property type="entry name" value="G64753"/>
</dbReference>
<dbReference type="RefSeq" id="NP_414813.1">
    <property type="nucleotide sequence ID" value="NC_000913.3"/>
</dbReference>
<dbReference type="RefSeq" id="WP_000072039.1">
    <property type="nucleotide sequence ID" value="NZ_LN832404.1"/>
</dbReference>
<dbReference type="SMR" id="P71296"/>
<dbReference type="BioGRID" id="4259782">
    <property type="interactions" value="21"/>
</dbReference>
<dbReference type="FunCoup" id="P71296">
    <property type="interactions" value="11"/>
</dbReference>
<dbReference type="IntAct" id="P71296">
    <property type="interactions" value="5"/>
</dbReference>
<dbReference type="STRING" id="511145.b0279"/>
<dbReference type="PaxDb" id="511145-b0279"/>
<dbReference type="EnsemblBacteria" id="AAC73382">
    <property type="protein sequence ID" value="AAC73382"/>
    <property type="gene ID" value="b0279"/>
</dbReference>
<dbReference type="GeneID" id="944959"/>
<dbReference type="KEGG" id="ecj:JW0273"/>
<dbReference type="KEGG" id="eco:b0279"/>
<dbReference type="KEGG" id="ecoc:C3026_01350"/>
<dbReference type="KEGG" id="ecoc:C3026_23985"/>
<dbReference type="PATRIC" id="fig|511145.12.peg.284"/>
<dbReference type="EchoBASE" id="EB3322"/>
<dbReference type="eggNOG" id="ENOG5032RWR">
    <property type="taxonomic scope" value="Bacteria"/>
</dbReference>
<dbReference type="HOGENOM" id="CLU_085314_0_0_6"/>
<dbReference type="InParanoid" id="P71296"/>
<dbReference type="OMA" id="CIKDICE"/>
<dbReference type="OrthoDB" id="6555934at2"/>
<dbReference type="BioCyc" id="EcoCyc:G6150-MONOMER"/>
<dbReference type="PRO" id="PR:P71296"/>
<dbReference type="Proteomes" id="UP000000625">
    <property type="component" value="Chromosome"/>
</dbReference>
<dbReference type="InterPro" id="IPR016513">
    <property type="entry name" value="UCP007319"/>
</dbReference>
<dbReference type="PIRSF" id="PIRSF007319">
    <property type="entry name" value="UCP007319"/>
    <property type="match status" value="1"/>
</dbReference>
<evidence type="ECO:0000256" key="1">
    <source>
        <dbReference type="SAM" id="MobiDB-lite"/>
    </source>
</evidence>
<keyword id="KW-1185">Reference proteome</keyword>